<keyword id="KW-0067">ATP-binding</keyword>
<keyword id="KW-0547">Nucleotide-binding</keyword>
<keyword id="KW-1185">Reference proteome</keyword>
<evidence type="ECO:0000250" key="1">
    <source>
        <dbReference type="UniProtKB" id="P9WFD7"/>
    </source>
</evidence>
<evidence type="ECO:0000269" key="2">
    <source>
    </source>
</evidence>
<evidence type="ECO:0000305" key="3"/>
<reference key="1">
    <citation type="journal article" date="2002" name="J. Bacteriol.">
        <title>Whole-genome comparison of Mycobacterium tuberculosis clinical and laboratory strains.</title>
        <authorList>
            <person name="Fleischmann R.D."/>
            <person name="Alland D."/>
            <person name="Eisen J.A."/>
            <person name="Carpenter L."/>
            <person name="White O."/>
            <person name="Peterson J.D."/>
            <person name="DeBoy R.T."/>
            <person name="Dodson R.J."/>
            <person name="Gwinn M.L."/>
            <person name="Haft D.H."/>
            <person name="Hickey E.K."/>
            <person name="Kolonay J.F."/>
            <person name="Nelson W.C."/>
            <person name="Umayam L.A."/>
            <person name="Ermolaeva M.D."/>
            <person name="Salzberg S.L."/>
            <person name="Delcher A."/>
            <person name="Utterback T.R."/>
            <person name="Weidman J.F."/>
            <person name="Khouri H.M."/>
            <person name="Gill J."/>
            <person name="Mikula A."/>
            <person name="Bishai W."/>
            <person name="Jacobs W.R. Jr."/>
            <person name="Venter J.C."/>
            <person name="Fraser C.M."/>
        </authorList>
    </citation>
    <scope>NUCLEOTIDE SEQUENCE [LARGE SCALE GENOMIC DNA]</scope>
    <source>
        <strain>CDC 1551 / Oshkosh</strain>
    </source>
</reference>
<reference key="2">
    <citation type="journal article" date="2003" name="J. Exp. Med.">
        <title>Inhibition of respiration by nitric oxide induces a Mycobacterium tuberculosis dormancy program.</title>
        <authorList>
            <person name="Voskuil M.I."/>
            <person name="Schnappinger D."/>
            <person name="Visconti K.C."/>
            <person name="Harrell M.I."/>
            <person name="Dolganov G.M."/>
            <person name="Sherman D.R."/>
            <person name="Schoolnik G.K."/>
        </authorList>
    </citation>
    <scope>INDUCTION BY NITRIC OXIDE (NO) AND BY HYPOXIA</scope>
    <scope>DORMANCY REGULON</scope>
    <source>
        <strain>CDC 1551 / Oshkosh</strain>
    </source>
</reference>
<comment type="induction">
    <text evidence="2">A member of the dormancy regulon. Induced in response to reduced oxygen tension (hypoxia) (at protein level) and low levels of nitric oxide (NO).</text>
</comment>
<comment type="similarity">
    <text evidence="3">Belongs to the universal stress protein A family.</text>
</comment>
<name>Y2005_MYCTO</name>
<gene>
    <name type="ordered locus">MT2061</name>
</gene>
<organism>
    <name type="scientific">Mycobacterium tuberculosis (strain CDC 1551 / Oshkosh)</name>
    <dbReference type="NCBI Taxonomy" id="83331"/>
    <lineage>
        <taxon>Bacteria</taxon>
        <taxon>Bacillati</taxon>
        <taxon>Actinomycetota</taxon>
        <taxon>Actinomycetes</taxon>
        <taxon>Mycobacteriales</taxon>
        <taxon>Mycobacteriaceae</taxon>
        <taxon>Mycobacterium</taxon>
        <taxon>Mycobacterium tuberculosis complex</taxon>
    </lineage>
</organism>
<sequence>MSKPRKQHGVVVGVDGSLESDAAACWGATDAAMRNIPLTVVHVVNADVATWPPMPYPETWGVWQEDEGRQIVANAVKLAKEAVGADRKLSVKSELVFSTPVPTMVEISNEAEMVVLGSSGRGALARGLLGSVSSSLVRRAGCPVAVIHSDDAVIPDPQHAPVLVGIDGSPVSELATAVAFDEASRRGVELIAVHAWSDVEVVELPGLDFSAVQQEAELSLAERLAGWQERYPDVPVSRVVVCDRPARKLVQKSASAQLVVVGSHGRGGLTGMLLGSVSNAVLHAARVPVIVARQS</sequence>
<accession>P9WLN0</accession>
<accession>L0T8C5</accession>
<accession>P64921</accession>
<accession>Q10851</accession>
<protein>
    <recommendedName>
        <fullName>Universal stress protein MT2061</fullName>
    </recommendedName>
</protein>
<dbReference type="EMBL" id="AE000516">
    <property type="protein sequence ID" value="AAK46338.1"/>
    <property type="molecule type" value="Genomic_DNA"/>
</dbReference>
<dbReference type="PIR" id="C70759">
    <property type="entry name" value="C70759"/>
</dbReference>
<dbReference type="RefSeq" id="WP_003410060.1">
    <property type="nucleotide sequence ID" value="NZ_KK341227.1"/>
</dbReference>
<dbReference type="SMR" id="P9WLN0"/>
<dbReference type="KEGG" id="mtc:MT2061"/>
<dbReference type="PATRIC" id="fig|83331.31.peg.2219"/>
<dbReference type="HOGENOM" id="CLU_049301_2_3_11"/>
<dbReference type="Proteomes" id="UP000001020">
    <property type="component" value="Chromosome"/>
</dbReference>
<dbReference type="GO" id="GO:0005524">
    <property type="term" value="F:ATP binding"/>
    <property type="evidence" value="ECO:0007669"/>
    <property type="project" value="UniProtKB-KW"/>
</dbReference>
<dbReference type="CDD" id="cd23944">
    <property type="entry name" value="USP_Rv2623_repeat1"/>
    <property type="match status" value="1"/>
</dbReference>
<dbReference type="FunFam" id="3.40.50.620:FF:000123">
    <property type="entry name" value="Universal stress protein family"/>
    <property type="match status" value="2"/>
</dbReference>
<dbReference type="Gene3D" id="3.40.50.620">
    <property type="entry name" value="HUPs"/>
    <property type="match status" value="2"/>
</dbReference>
<dbReference type="InterPro" id="IPR014729">
    <property type="entry name" value="Rossmann-like_a/b/a_fold"/>
</dbReference>
<dbReference type="InterPro" id="IPR006015">
    <property type="entry name" value="Universal_stress_UspA"/>
</dbReference>
<dbReference type="InterPro" id="IPR006016">
    <property type="entry name" value="UspA"/>
</dbReference>
<dbReference type="PANTHER" id="PTHR46268">
    <property type="entry name" value="STRESS RESPONSE PROTEIN NHAX"/>
    <property type="match status" value="1"/>
</dbReference>
<dbReference type="PANTHER" id="PTHR46268:SF27">
    <property type="entry name" value="UNIVERSAL STRESS PROTEIN RV2623"/>
    <property type="match status" value="1"/>
</dbReference>
<dbReference type="Pfam" id="PF00582">
    <property type="entry name" value="Usp"/>
    <property type="match status" value="2"/>
</dbReference>
<dbReference type="PRINTS" id="PR01438">
    <property type="entry name" value="UNVRSLSTRESS"/>
</dbReference>
<dbReference type="SUPFAM" id="SSF52402">
    <property type="entry name" value="Adenine nucleotide alpha hydrolases-like"/>
    <property type="match status" value="2"/>
</dbReference>
<feature type="chain" id="PRO_0000427450" description="Universal stress protein MT2061">
    <location>
        <begin position="1"/>
        <end position="295"/>
    </location>
</feature>
<feature type="binding site" evidence="1">
    <location>
        <position position="13"/>
    </location>
    <ligand>
        <name>ATP</name>
        <dbReference type="ChEBI" id="CHEBI:30616"/>
        <label>1</label>
    </ligand>
</feature>
<feature type="binding site" evidence="1">
    <location>
        <begin position="117"/>
        <end position="123"/>
    </location>
    <ligand>
        <name>ATP</name>
        <dbReference type="ChEBI" id="CHEBI:30616"/>
        <label>1</label>
    </ligand>
</feature>
<feature type="binding site" evidence="1">
    <location>
        <begin position="131"/>
        <end position="132"/>
    </location>
    <ligand>
        <name>ATP</name>
        <dbReference type="ChEBI" id="CHEBI:30616"/>
        <label>1</label>
    </ligand>
</feature>
<feature type="binding site" evidence="1">
    <location>
        <position position="165"/>
    </location>
    <ligand>
        <name>ATP</name>
        <dbReference type="ChEBI" id="CHEBI:30616"/>
        <label>2</label>
    </ligand>
</feature>
<feature type="binding site" evidence="1">
    <location>
        <position position="198"/>
    </location>
    <ligand>
        <name>ATP</name>
        <dbReference type="ChEBI" id="CHEBI:30616"/>
        <label>2</label>
    </ligand>
</feature>
<feature type="binding site" evidence="1">
    <location>
        <begin position="262"/>
        <end position="268"/>
    </location>
    <ligand>
        <name>ATP</name>
        <dbReference type="ChEBI" id="CHEBI:30616"/>
        <label>2</label>
    </ligand>
</feature>
<feature type="binding site" evidence="1">
    <location>
        <begin position="276"/>
        <end position="278"/>
    </location>
    <ligand>
        <name>ATP</name>
        <dbReference type="ChEBI" id="CHEBI:30616"/>
        <label>2</label>
    </ligand>
</feature>
<proteinExistence type="evidence at protein level"/>